<feature type="chain" id="PRO_0000102880" description="Succinate--CoA ligase [ADP-forming] subunit beta">
    <location>
        <begin position="1"/>
        <end position="388"/>
    </location>
</feature>
<feature type="domain" description="ATP-grasp" evidence="1">
    <location>
        <begin position="9"/>
        <end position="244"/>
    </location>
</feature>
<feature type="binding site" evidence="1">
    <location>
        <position position="46"/>
    </location>
    <ligand>
        <name>ATP</name>
        <dbReference type="ChEBI" id="CHEBI:30616"/>
    </ligand>
</feature>
<feature type="binding site" evidence="1">
    <location>
        <begin position="53"/>
        <end position="55"/>
    </location>
    <ligand>
        <name>ATP</name>
        <dbReference type="ChEBI" id="CHEBI:30616"/>
    </ligand>
</feature>
<feature type="binding site" evidence="1">
    <location>
        <position position="99"/>
    </location>
    <ligand>
        <name>ATP</name>
        <dbReference type="ChEBI" id="CHEBI:30616"/>
    </ligand>
</feature>
<feature type="binding site" evidence="1">
    <location>
        <position position="102"/>
    </location>
    <ligand>
        <name>ATP</name>
        <dbReference type="ChEBI" id="CHEBI:30616"/>
    </ligand>
</feature>
<feature type="binding site" evidence="1">
    <location>
        <position position="107"/>
    </location>
    <ligand>
        <name>ATP</name>
        <dbReference type="ChEBI" id="CHEBI:30616"/>
    </ligand>
</feature>
<feature type="binding site" evidence="1">
    <location>
        <position position="199"/>
    </location>
    <ligand>
        <name>Mg(2+)</name>
        <dbReference type="ChEBI" id="CHEBI:18420"/>
    </ligand>
</feature>
<feature type="binding site" evidence="1">
    <location>
        <position position="213"/>
    </location>
    <ligand>
        <name>Mg(2+)</name>
        <dbReference type="ChEBI" id="CHEBI:18420"/>
    </ligand>
</feature>
<feature type="binding site" evidence="1">
    <location>
        <position position="264"/>
    </location>
    <ligand>
        <name>substrate</name>
        <note>ligand shared with subunit alpha</note>
    </ligand>
</feature>
<feature type="binding site" evidence="1">
    <location>
        <begin position="321"/>
        <end position="323"/>
    </location>
    <ligand>
        <name>substrate</name>
        <note>ligand shared with subunit alpha</note>
    </ligand>
</feature>
<gene>
    <name evidence="1" type="primary">sucC</name>
    <name type="ordered locus">YPO1115</name>
    <name type="ordered locus">y3065</name>
    <name type="ordered locus">YP_1041</name>
</gene>
<sequence length="388" mass="41406">MNLHEYQAKQLFARYGMPAPTGYACTTPREAEEAASKIGAGPWVVKCQVHAGGRGKAGGVKLVNSKEDIRAFAEQWLGKKLVTYQTDANGQPVHQILVEAATDIDKELYLGAVIDRSSRRVVFMASTEGGVEIEKVAEETPELIHKIALDPLTGPQPYQGRELAFKLGLTGKQVGQFTKIFMGLATLFLERDLAMVEINPLVVTKQGDLICLDGKLGADGNALFRQPELREMRDPSQEDAREAHAAQWELNYVALDGNIGCMVNGAGLAMGTMDIVKLHGGEPANFLDVGGGATKERVTEAFKIILSDDKVKAVFVNIFGGIVRCDLIADGIIGAVEEVGVNVPVVVRLEGNNAELGAKKLADSGLNIIAATSLTDAAQQVVAAVGAK</sequence>
<accession>Q8ZH00</accession>
<accession>Q0WHT0</accession>
<evidence type="ECO:0000255" key="1">
    <source>
        <dbReference type="HAMAP-Rule" id="MF_00558"/>
    </source>
</evidence>
<organism>
    <name type="scientific">Yersinia pestis</name>
    <dbReference type="NCBI Taxonomy" id="632"/>
    <lineage>
        <taxon>Bacteria</taxon>
        <taxon>Pseudomonadati</taxon>
        <taxon>Pseudomonadota</taxon>
        <taxon>Gammaproteobacteria</taxon>
        <taxon>Enterobacterales</taxon>
        <taxon>Yersiniaceae</taxon>
        <taxon>Yersinia</taxon>
    </lineage>
</organism>
<reference key="1">
    <citation type="journal article" date="2001" name="Nature">
        <title>Genome sequence of Yersinia pestis, the causative agent of plague.</title>
        <authorList>
            <person name="Parkhill J."/>
            <person name="Wren B.W."/>
            <person name="Thomson N.R."/>
            <person name="Titball R.W."/>
            <person name="Holden M.T.G."/>
            <person name="Prentice M.B."/>
            <person name="Sebaihia M."/>
            <person name="James K.D."/>
            <person name="Churcher C.M."/>
            <person name="Mungall K.L."/>
            <person name="Baker S."/>
            <person name="Basham D."/>
            <person name="Bentley S.D."/>
            <person name="Brooks K."/>
            <person name="Cerdeno-Tarraga A.-M."/>
            <person name="Chillingworth T."/>
            <person name="Cronin A."/>
            <person name="Davies R.M."/>
            <person name="Davis P."/>
            <person name="Dougan G."/>
            <person name="Feltwell T."/>
            <person name="Hamlin N."/>
            <person name="Holroyd S."/>
            <person name="Jagels K."/>
            <person name="Karlyshev A.V."/>
            <person name="Leather S."/>
            <person name="Moule S."/>
            <person name="Oyston P.C.F."/>
            <person name="Quail M.A."/>
            <person name="Rutherford K.M."/>
            <person name="Simmonds M."/>
            <person name="Skelton J."/>
            <person name="Stevens K."/>
            <person name="Whitehead S."/>
            <person name="Barrell B.G."/>
        </authorList>
    </citation>
    <scope>NUCLEOTIDE SEQUENCE [LARGE SCALE GENOMIC DNA]</scope>
    <source>
        <strain>CO-92 / Biovar Orientalis</strain>
    </source>
</reference>
<reference key="2">
    <citation type="journal article" date="2002" name="J. Bacteriol.">
        <title>Genome sequence of Yersinia pestis KIM.</title>
        <authorList>
            <person name="Deng W."/>
            <person name="Burland V."/>
            <person name="Plunkett G. III"/>
            <person name="Boutin A."/>
            <person name="Mayhew G.F."/>
            <person name="Liss P."/>
            <person name="Perna N.T."/>
            <person name="Rose D.J."/>
            <person name="Mau B."/>
            <person name="Zhou S."/>
            <person name="Schwartz D.C."/>
            <person name="Fetherston J.D."/>
            <person name="Lindler L.E."/>
            <person name="Brubaker R.R."/>
            <person name="Plano G.V."/>
            <person name="Straley S.C."/>
            <person name="McDonough K.A."/>
            <person name="Nilles M.L."/>
            <person name="Matson J.S."/>
            <person name="Blattner F.R."/>
            <person name="Perry R.D."/>
        </authorList>
    </citation>
    <scope>NUCLEOTIDE SEQUENCE [LARGE SCALE GENOMIC DNA]</scope>
    <source>
        <strain>KIM10+ / Biovar Mediaevalis</strain>
    </source>
</reference>
<reference key="3">
    <citation type="journal article" date="2004" name="DNA Res.">
        <title>Complete genome sequence of Yersinia pestis strain 91001, an isolate avirulent to humans.</title>
        <authorList>
            <person name="Song Y."/>
            <person name="Tong Z."/>
            <person name="Wang J."/>
            <person name="Wang L."/>
            <person name="Guo Z."/>
            <person name="Han Y."/>
            <person name="Zhang J."/>
            <person name="Pei D."/>
            <person name="Zhou D."/>
            <person name="Qin H."/>
            <person name="Pang X."/>
            <person name="Han Y."/>
            <person name="Zhai J."/>
            <person name="Li M."/>
            <person name="Cui B."/>
            <person name="Qi Z."/>
            <person name="Jin L."/>
            <person name="Dai R."/>
            <person name="Chen F."/>
            <person name="Li S."/>
            <person name="Ye C."/>
            <person name="Du Z."/>
            <person name="Lin W."/>
            <person name="Wang J."/>
            <person name="Yu J."/>
            <person name="Yang H."/>
            <person name="Wang J."/>
            <person name="Huang P."/>
            <person name="Yang R."/>
        </authorList>
    </citation>
    <scope>NUCLEOTIDE SEQUENCE [LARGE SCALE GENOMIC DNA]</scope>
    <source>
        <strain>91001 / Biovar Mediaevalis</strain>
    </source>
</reference>
<keyword id="KW-0067">ATP-binding</keyword>
<keyword id="KW-0436">Ligase</keyword>
<keyword id="KW-0460">Magnesium</keyword>
<keyword id="KW-0479">Metal-binding</keyword>
<keyword id="KW-0547">Nucleotide-binding</keyword>
<keyword id="KW-1185">Reference proteome</keyword>
<keyword id="KW-0816">Tricarboxylic acid cycle</keyword>
<comment type="function">
    <text evidence="1">Succinyl-CoA synthetase functions in the citric acid cycle (TCA), coupling the hydrolysis of succinyl-CoA to the synthesis of either ATP or GTP and thus represents the only step of substrate-level phosphorylation in the TCA. The beta subunit provides nucleotide specificity of the enzyme and binds the substrate succinate, while the binding sites for coenzyme A and phosphate are found in the alpha subunit.</text>
</comment>
<comment type="catalytic activity">
    <reaction evidence="1">
        <text>succinate + ATP + CoA = succinyl-CoA + ADP + phosphate</text>
        <dbReference type="Rhea" id="RHEA:17661"/>
        <dbReference type="ChEBI" id="CHEBI:30031"/>
        <dbReference type="ChEBI" id="CHEBI:30616"/>
        <dbReference type="ChEBI" id="CHEBI:43474"/>
        <dbReference type="ChEBI" id="CHEBI:57287"/>
        <dbReference type="ChEBI" id="CHEBI:57292"/>
        <dbReference type="ChEBI" id="CHEBI:456216"/>
        <dbReference type="EC" id="6.2.1.5"/>
    </reaction>
    <physiologicalReaction direction="right-to-left" evidence="1">
        <dbReference type="Rhea" id="RHEA:17663"/>
    </physiologicalReaction>
</comment>
<comment type="catalytic activity">
    <reaction evidence="1">
        <text>GTP + succinate + CoA = succinyl-CoA + GDP + phosphate</text>
        <dbReference type="Rhea" id="RHEA:22120"/>
        <dbReference type="ChEBI" id="CHEBI:30031"/>
        <dbReference type="ChEBI" id="CHEBI:37565"/>
        <dbReference type="ChEBI" id="CHEBI:43474"/>
        <dbReference type="ChEBI" id="CHEBI:57287"/>
        <dbReference type="ChEBI" id="CHEBI:57292"/>
        <dbReference type="ChEBI" id="CHEBI:58189"/>
    </reaction>
    <physiologicalReaction direction="right-to-left" evidence="1">
        <dbReference type="Rhea" id="RHEA:22122"/>
    </physiologicalReaction>
</comment>
<comment type="cofactor">
    <cofactor evidence="1">
        <name>Mg(2+)</name>
        <dbReference type="ChEBI" id="CHEBI:18420"/>
    </cofactor>
    <text evidence="1">Binds 1 Mg(2+) ion per subunit.</text>
</comment>
<comment type="pathway">
    <text evidence="1">Carbohydrate metabolism; tricarboxylic acid cycle; succinate from succinyl-CoA (ligase route): step 1/1.</text>
</comment>
<comment type="subunit">
    <text evidence="1">Heterotetramer of two alpha and two beta subunits.</text>
</comment>
<comment type="similarity">
    <text evidence="1">Belongs to the succinate/malate CoA ligase beta subunit family.</text>
</comment>
<protein>
    <recommendedName>
        <fullName evidence="1">Succinate--CoA ligase [ADP-forming] subunit beta</fullName>
        <ecNumber evidence="1">6.2.1.5</ecNumber>
    </recommendedName>
    <alternativeName>
        <fullName evidence="1">Succinyl-CoA synthetase subunit beta</fullName>
        <shortName evidence="1">SCS-beta</shortName>
    </alternativeName>
</protein>
<dbReference type="EC" id="6.2.1.5" evidence="1"/>
<dbReference type="EMBL" id="AL590842">
    <property type="protein sequence ID" value="CAL19781.1"/>
    <property type="molecule type" value="Genomic_DNA"/>
</dbReference>
<dbReference type="EMBL" id="AE009952">
    <property type="protein sequence ID" value="AAM86615.1"/>
    <property type="molecule type" value="Genomic_DNA"/>
</dbReference>
<dbReference type="EMBL" id="AE017042">
    <property type="protein sequence ID" value="AAS61291.1"/>
    <property type="molecule type" value="Genomic_DNA"/>
</dbReference>
<dbReference type="PIR" id="AC0137">
    <property type="entry name" value="AC0137"/>
</dbReference>
<dbReference type="RefSeq" id="WP_002210728.1">
    <property type="nucleotide sequence ID" value="NZ_WUCM01000016.1"/>
</dbReference>
<dbReference type="RefSeq" id="YP_002346158.1">
    <property type="nucleotide sequence ID" value="NC_003143.1"/>
</dbReference>
<dbReference type="SMR" id="Q8ZH00"/>
<dbReference type="IntAct" id="Q8ZH00">
    <property type="interactions" value="3"/>
</dbReference>
<dbReference type="STRING" id="214092.YPO1115"/>
<dbReference type="PaxDb" id="214092-YPO1115"/>
<dbReference type="DNASU" id="1148012"/>
<dbReference type="EnsemblBacteria" id="AAS61291">
    <property type="protein sequence ID" value="AAS61291"/>
    <property type="gene ID" value="YP_1041"/>
</dbReference>
<dbReference type="GeneID" id="57977251"/>
<dbReference type="KEGG" id="ype:YPO1115"/>
<dbReference type="KEGG" id="ypk:y3065"/>
<dbReference type="KEGG" id="ypm:YP_1041"/>
<dbReference type="PATRIC" id="fig|214092.21.peg.1407"/>
<dbReference type="eggNOG" id="COG0045">
    <property type="taxonomic scope" value="Bacteria"/>
</dbReference>
<dbReference type="HOGENOM" id="CLU_037430_0_2_6"/>
<dbReference type="OMA" id="ITACDEV"/>
<dbReference type="OrthoDB" id="9802602at2"/>
<dbReference type="UniPathway" id="UPA00223">
    <property type="reaction ID" value="UER00999"/>
</dbReference>
<dbReference type="Proteomes" id="UP000000815">
    <property type="component" value="Chromosome"/>
</dbReference>
<dbReference type="Proteomes" id="UP000001019">
    <property type="component" value="Chromosome"/>
</dbReference>
<dbReference type="Proteomes" id="UP000002490">
    <property type="component" value="Chromosome"/>
</dbReference>
<dbReference type="GO" id="GO:0005829">
    <property type="term" value="C:cytosol"/>
    <property type="evidence" value="ECO:0000318"/>
    <property type="project" value="GO_Central"/>
</dbReference>
<dbReference type="GO" id="GO:0042709">
    <property type="term" value="C:succinate-CoA ligase complex"/>
    <property type="evidence" value="ECO:0000318"/>
    <property type="project" value="GO_Central"/>
</dbReference>
<dbReference type="GO" id="GO:0005524">
    <property type="term" value="F:ATP binding"/>
    <property type="evidence" value="ECO:0007669"/>
    <property type="project" value="UniProtKB-UniRule"/>
</dbReference>
<dbReference type="GO" id="GO:0000287">
    <property type="term" value="F:magnesium ion binding"/>
    <property type="evidence" value="ECO:0007669"/>
    <property type="project" value="UniProtKB-UniRule"/>
</dbReference>
<dbReference type="GO" id="GO:0004775">
    <property type="term" value="F:succinate-CoA ligase (ADP-forming) activity"/>
    <property type="evidence" value="ECO:0000318"/>
    <property type="project" value="GO_Central"/>
</dbReference>
<dbReference type="GO" id="GO:0004776">
    <property type="term" value="F:succinate-CoA ligase (GDP-forming) activity"/>
    <property type="evidence" value="ECO:0007669"/>
    <property type="project" value="RHEA"/>
</dbReference>
<dbReference type="GO" id="GO:0006104">
    <property type="term" value="P:succinyl-CoA metabolic process"/>
    <property type="evidence" value="ECO:0000318"/>
    <property type="project" value="GO_Central"/>
</dbReference>
<dbReference type="GO" id="GO:0006099">
    <property type="term" value="P:tricarboxylic acid cycle"/>
    <property type="evidence" value="ECO:0000318"/>
    <property type="project" value="GO_Central"/>
</dbReference>
<dbReference type="FunFam" id="3.30.1490.20:FF:000002">
    <property type="entry name" value="Succinate--CoA ligase [ADP-forming] subunit beta"/>
    <property type="match status" value="1"/>
</dbReference>
<dbReference type="FunFam" id="3.30.470.20:FF:000002">
    <property type="entry name" value="Succinate--CoA ligase [ADP-forming] subunit beta"/>
    <property type="match status" value="1"/>
</dbReference>
<dbReference type="FunFam" id="3.40.50.261:FF:000001">
    <property type="entry name" value="Succinate--CoA ligase [ADP-forming] subunit beta"/>
    <property type="match status" value="1"/>
</dbReference>
<dbReference type="Gene3D" id="3.30.1490.20">
    <property type="entry name" value="ATP-grasp fold, A domain"/>
    <property type="match status" value="1"/>
</dbReference>
<dbReference type="Gene3D" id="3.30.470.20">
    <property type="entry name" value="ATP-grasp fold, B domain"/>
    <property type="match status" value="1"/>
</dbReference>
<dbReference type="Gene3D" id="3.40.50.261">
    <property type="entry name" value="Succinyl-CoA synthetase domains"/>
    <property type="match status" value="1"/>
</dbReference>
<dbReference type="HAMAP" id="MF_00558">
    <property type="entry name" value="Succ_CoA_beta"/>
    <property type="match status" value="1"/>
</dbReference>
<dbReference type="InterPro" id="IPR011761">
    <property type="entry name" value="ATP-grasp"/>
</dbReference>
<dbReference type="InterPro" id="IPR013650">
    <property type="entry name" value="ATP-grasp_succ-CoA_synth-type"/>
</dbReference>
<dbReference type="InterPro" id="IPR013815">
    <property type="entry name" value="ATP_grasp_subdomain_1"/>
</dbReference>
<dbReference type="InterPro" id="IPR017866">
    <property type="entry name" value="Succ-CoA_synthase_bsu_CS"/>
</dbReference>
<dbReference type="InterPro" id="IPR005811">
    <property type="entry name" value="SUCC_ACL_C"/>
</dbReference>
<dbReference type="InterPro" id="IPR005809">
    <property type="entry name" value="Succ_CoA_ligase-like_bsu"/>
</dbReference>
<dbReference type="InterPro" id="IPR016102">
    <property type="entry name" value="Succinyl-CoA_synth-like"/>
</dbReference>
<dbReference type="NCBIfam" id="NF001913">
    <property type="entry name" value="PRK00696.1"/>
    <property type="match status" value="1"/>
</dbReference>
<dbReference type="NCBIfam" id="TIGR01016">
    <property type="entry name" value="sucCoAbeta"/>
    <property type="match status" value="1"/>
</dbReference>
<dbReference type="PANTHER" id="PTHR11815:SF10">
    <property type="entry name" value="SUCCINATE--COA LIGASE [GDP-FORMING] SUBUNIT BETA, MITOCHONDRIAL"/>
    <property type="match status" value="1"/>
</dbReference>
<dbReference type="PANTHER" id="PTHR11815">
    <property type="entry name" value="SUCCINYL-COA SYNTHETASE BETA CHAIN"/>
    <property type="match status" value="1"/>
</dbReference>
<dbReference type="Pfam" id="PF08442">
    <property type="entry name" value="ATP-grasp_2"/>
    <property type="match status" value="1"/>
</dbReference>
<dbReference type="Pfam" id="PF00549">
    <property type="entry name" value="Ligase_CoA"/>
    <property type="match status" value="1"/>
</dbReference>
<dbReference type="PIRSF" id="PIRSF001554">
    <property type="entry name" value="SucCS_beta"/>
    <property type="match status" value="1"/>
</dbReference>
<dbReference type="SUPFAM" id="SSF56059">
    <property type="entry name" value="Glutathione synthetase ATP-binding domain-like"/>
    <property type="match status" value="1"/>
</dbReference>
<dbReference type="SUPFAM" id="SSF52210">
    <property type="entry name" value="Succinyl-CoA synthetase domains"/>
    <property type="match status" value="1"/>
</dbReference>
<dbReference type="PROSITE" id="PS50975">
    <property type="entry name" value="ATP_GRASP"/>
    <property type="match status" value="1"/>
</dbReference>
<dbReference type="PROSITE" id="PS01217">
    <property type="entry name" value="SUCCINYL_COA_LIG_3"/>
    <property type="match status" value="1"/>
</dbReference>
<name>SUCC_YERPE</name>
<proteinExistence type="inferred from homology"/>